<name>SOSSC_CHICK</name>
<feature type="chain" id="PRO_0000279421" description="SOSS complex subunit C">
    <location>
        <begin position="1"/>
        <end position="103"/>
    </location>
</feature>
<protein>
    <recommendedName>
        <fullName>SOSS complex subunit C</fullName>
    </recommendedName>
    <alternativeName>
        <fullName>INTS3- and NABP-interacting protein</fullName>
    </alternativeName>
    <alternativeName>
        <fullName>Sensor of single-strand DNA complex subunit C</fullName>
    </alternativeName>
    <alternativeName>
        <fullName>Sensor of ssDNA subunit C</fullName>
        <shortName>SOSS-C</shortName>
    </alternativeName>
    <alternativeName>
        <fullName>Single-stranded DNA-binding protein-interacting protein 1</fullName>
        <shortName>SSB-interacting protein 1</shortName>
    </alternativeName>
</protein>
<reference key="1">
    <citation type="journal article" date="2005" name="Genome Biol.">
        <title>Full-length cDNAs from chicken bursal lymphocytes to facilitate gene function analysis.</title>
        <authorList>
            <person name="Caldwell R.B."/>
            <person name="Kierzek A.M."/>
            <person name="Arakawa H."/>
            <person name="Bezzubov Y."/>
            <person name="Zaim J."/>
            <person name="Fiedler P."/>
            <person name="Kutter S."/>
            <person name="Blagodatski A."/>
            <person name="Kostovska D."/>
            <person name="Koter M."/>
            <person name="Plachy J."/>
            <person name="Carninci P."/>
            <person name="Hayashizaki Y."/>
            <person name="Buerstedde J.-M."/>
        </authorList>
    </citation>
    <scope>NUCLEOTIDE SEQUENCE [LARGE SCALE MRNA]</scope>
    <source>
        <strain>CB</strain>
        <tissue>Bursa of Fabricius</tissue>
    </source>
</reference>
<proteinExistence type="inferred from homology"/>
<gene>
    <name type="primary">INIP</name>
    <name type="synonym">SSBIP1</name>
    <name type="ORF">RCJMB04_21d4</name>
</gene>
<comment type="function">
    <text evidence="1">Component of the SOSS complex, a multiprotein complex that functions downstream of the MRN complex to promote DNA repair and G2/M checkpoint. The SOSS complex associates with single-stranded DNA at DNA lesions and influences diverse endpoints in the cellular DNA damage response including cell-cycle checkpoint activation, recombinational repair and maintenance of genomic stability. Required for efficient homologous recombination-dependent repair of double-strand breaks (DSBs) (By similarity).</text>
</comment>
<comment type="subunit">
    <text evidence="1">Belongs to the multiprotein complex Integrator. Component of the SOSS complex, composed of SOSS-B (SOSS-B1/NABP2 or SOSS-B2/NABP1), SOSS-A/INTS3 and SOSS-C/INIP (By similarity).</text>
</comment>
<comment type="subcellular location">
    <subcellularLocation>
        <location evidence="1">Nucleus</location>
    </subcellularLocation>
    <text evidence="1">Localizes to nuclear foci following DNA damage.</text>
</comment>
<comment type="similarity">
    <text evidence="2">Belongs to the SOSS-C family.</text>
</comment>
<evidence type="ECO:0000250" key="1"/>
<evidence type="ECO:0000305" key="2"/>
<accession>Q5ZJ32</accession>
<keyword id="KW-0227">DNA damage</keyword>
<keyword id="KW-0234">DNA repair</keyword>
<keyword id="KW-0539">Nucleus</keyword>
<keyword id="KW-1185">Reference proteome</keyword>
<sequence length="103" mass="11292">MAANPSGQGFQNKNRVAILAELQEKRKLLMQNQSSTNHPGASIALARSPLNKDFRDHAEQQHIAAQQKAALQHAHAHSSGYFITQDSAFGNLILPVLPRLEAE</sequence>
<organism>
    <name type="scientific">Gallus gallus</name>
    <name type="common">Chicken</name>
    <dbReference type="NCBI Taxonomy" id="9031"/>
    <lineage>
        <taxon>Eukaryota</taxon>
        <taxon>Metazoa</taxon>
        <taxon>Chordata</taxon>
        <taxon>Craniata</taxon>
        <taxon>Vertebrata</taxon>
        <taxon>Euteleostomi</taxon>
        <taxon>Archelosauria</taxon>
        <taxon>Archosauria</taxon>
        <taxon>Dinosauria</taxon>
        <taxon>Saurischia</taxon>
        <taxon>Theropoda</taxon>
        <taxon>Coelurosauria</taxon>
        <taxon>Aves</taxon>
        <taxon>Neognathae</taxon>
        <taxon>Galloanserae</taxon>
        <taxon>Galliformes</taxon>
        <taxon>Phasianidae</taxon>
        <taxon>Phasianinae</taxon>
        <taxon>Gallus</taxon>
    </lineage>
</organism>
<dbReference type="EMBL" id="AJ720602">
    <property type="protein sequence ID" value="CAG32261.1"/>
    <property type="molecule type" value="mRNA"/>
</dbReference>
<dbReference type="RefSeq" id="NP_001006585.1">
    <property type="nucleotide sequence ID" value="NM_001006585.1"/>
</dbReference>
<dbReference type="SMR" id="Q5ZJ32"/>
<dbReference type="FunCoup" id="Q5ZJ32">
    <property type="interactions" value="989"/>
</dbReference>
<dbReference type="STRING" id="9031.ENSGALP00000067900"/>
<dbReference type="PaxDb" id="9031-ENSGALP00000032142"/>
<dbReference type="KEGG" id="gga:427331"/>
<dbReference type="VEuPathDB" id="HostDB:geneid_427331"/>
<dbReference type="eggNOG" id="ENOG502S23S">
    <property type="taxonomic scope" value="Eukaryota"/>
</dbReference>
<dbReference type="InParanoid" id="Q5ZJ32"/>
<dbReference type="OrthoDB" id="10040290at2759"/>
<dbReference type="PhylomeDB" id="Q5ZJ32"/>
<dbReference type="PRO" id="PR:Q5ZJ32"/>
<dbReference type="Proteomes" id="UP000000539">
    <property type="component" value="Unassembled WGS sequence"/>
</dbReference>
<dbReference type="GO" id="GO:0005654">
    <property type="term" value="C:nucleoplasm"/>
    <property type="evidence" value="ECO:0000318"/>
    <property type="project" value="GO_Central"/>
</dbReference>
<dbReference type="GO" id="GO:0005634">
    <property type="term" value="C:nucleus"/>
    <property type="evidence" value="ECO:0000250"/>
    <property type="project" value="UniProtKB"/>
</dbReference>
<dbReference type="GO" id="GO:0070876">
    <property type="term" value="C:SOSS complex"/>
    <property type="evidence" value="ECO:0000250"/>
    <property type="project" value="UniProtKB"/>
</dbReference>
<dbReference type="GO" id="GO:0006974">
    <property type="term" value="P:DNA damage response"/>
    <property type="evidence" value="ECO:0000250"/>
    <property type="project" value="UniProtKB"/>
</dbReference>
<dbReference type="GO" id="GO:0006281">
    <property type="term" value="P:DNA repair"/>
    <property type="evidence" value="ECO:0000250"/>
    <property type="project" value="UniProtKB"/>
</dbReference>
<dbReference type="GO" id="GO:0010212">
    <property type="term" value="P:response to ionizing radiation"/>
    <property type="evidence" value="ECO:0000250"/>
    <property type="project" value="UniProtKB"/>
</dbReference>
<dbReference type="InterPro" id="IPR031821">
    <property type="entry name" value="SOSSC"/>
</dbReference>
<dbReference type="PANTHER" id="PTHR31526">
    <property type="entry name" value="SOSS COMPLEX SUBUNIT C"/>
    <property type="match status" value="1"/>
</dbReference>
<dbReference type="PANTHER" id="PTHR31526:SF2">
    <property type="entry name" value="SOSS COMPLEX SUBUNIT C"/>
    <property type="match status" value="1"/>
</dbReference>
<dbReference type="Pfam" id="PF15925">
    <property type="entry name" value="SOSSC"/>
    <property type="match status" value="1"/>
</dbReference>